<comment type="function">
    <text evidence="1">Part of the operon norEFCBQD encoding nitric oxide reductase. Essential virulence factor, probably involved in the detoxification of nitric oxide (NO) produced in the macrophages during the innate response against infection (By similarity).</text>
</comment>
<proteinExistence type="inferred from homology"/>
<accession>Q8YBA4</accession>
<dbReference type="EMBL" id="AE008918">
    <property type="protein sequence ID" value="AAL54238.1"/>
    <property type="molecule type" value="Genomic_DNA"/>
</dbReference>
<dbReference type="PIR" id="AC3634">
    <property type="entry name" value="AC3634"/>
</dbReference>
<dbReference type="RefSeq" id="WP_004681531.1">
    <property type="nucleotide sequence ID" value="NC_003318.1"/>
</dbReference>
<dbReference type="GeneID" id="29595402"/>
<dbReference type="KEGG" id="bme:BMEII0996"/>
<dbReference type="KEGG" id="bmel:DK63_2260"/>
<dbReference type="PATRIC" id="fig|224914.52.peg.2366"/>
<dbReference type="eggNOG" id="COG4548">
    <property type="taxonomic scope" value="Bacteria"/>
</dbReference>
<dbReference type="PhylomeDB" id="Q8YBA4"/>
<dbReference type="Proteomes" id="UP000000419">
    <property type="component" value="Chromosome II"/>
</dbReference>
<dbReference type="CDD" id="cd01454">
    <property type="entry name" value="vWA_norD_type"/>
    <property type="match status" value="1"/>
</dbReference>
<dbReference type="Gene3D" id="3.40.50.410">
    <property type="entry name" value="von Willebrand factor, type A domain"/>
    <property type="match status" value="1"/>
</dbReference>
<dbReference type="InterPro" id="IPR051928">
    <property type="entry name" value="NorD/CobT"/>
</dbReference>
<dbReference type="InterPro" id="IPR002035">
    <property type="entry name" value="VWF_A"/>
</dbReference>
<dbReference type="InterPro" id="IPR036465">
    <property type="entry name" value="vWFA_dom_sf"/>
</dbReference>
<dbReference type="PANTHER" id="PTHR41248">
    <property type="entry name" value="NORD PROTEIN"/>
    <property type="match status" value="1"/>
</dbReference>
<dbReference type="PANTHER" id="PTHR41248:SF1">
    <property type="entry name" value="NORD PROTEIN"/>
    <property type="match status" value="1"/>
</dbReference>
<dbReference type="Pfam" id="PF00092">
    <property type="entry name" value="VWA"/>
    <property type="match status" value="1"/>
</dbReference>
<dbReference type="SMART" id="SM00327">
    <property type="entry name" value="VWA"/>
    <property type="match status" value="1"/>
</dbReference>
<dbReference type="SUPFAM" id="SSF53300">
    <property type="entry name" value="vWA-like"/>
    <property type="match status" value="1"/>
</dbReference>
<dbReference type="PROSITE" id="PS50234">
    <property type="entry name" value="VWFA"/>
    <property type="match status" value="1"/>
</dbReference>
<evidence type="ECO:0000250" key="1"/>
<evidence type="ECO:0000255" key="2">
    <source>
        <dbReference type="PROSITE-ProRule" id="PRU00219"/>
    </source>
</evidence>
<evidence type="ECO:0000256" key="3">
    <source>
        <dbReference type="SAM" id="MobiDB-lite"/>
    </source>
</evidence>
<sequence length="633" mass="70651">MLDFLELEETVGRAWHRLIGKTGSWPQYPDHAVQLVDIRQRLAICFRGFGGDIAVQIAPARARTSTHRLGLRQRMALGEEKLAQPLRDEATLMLPPEIALFPDRQLNYDLYVWLVGYMAVMPMDADALPEDALRRDLAALQIAEQTVERACRAFPGLKPRYKRLCAAILAERPKRPLHRLEQQVEARILSLLKQGADLPDDALPTIFPHRGPAGYLPALPVPLWPGLMKREEVAPRTGEDEPVRNSQSEGAETGRQIAQRERQDPRHADRSPFILNRFEKILAMAEMVSVDRPSDGSDEQNAKSADELDDLTLGERKGRPAARFRFDLDLPPEAVDRSLLTAELTYPEWDYRKGAYLPNHCAVLAAPVQEKEKPLELDAAAQSLVRRVRRQFEILRPGREVLRAQLDGTDLDLDAVVRSRCDLAAGGQGSDRVHLMSRPQANDLAVTLLVDVSLSTDAWVDNRRVLDVEKEALLVLANGIAACGDRCSILTFTSRRRSWVRVETVKDFDESFGPTVEHRIAALKPGFYTRMGAAMRHATAKLAEQPNRKKLLLLLTDGKPNDVDHYEGRFALEDSRRAAGEVRAKGVNVFAVTVDREASAYLPALFGRGGYALVANLAKLPVALPAIYRMLAG</sequence>
<gene>
    <name type="primary">norD</name>
    <name type="ordered locus">BMEII0996</name>
</gene>
<name>NORD_BRUME</name>
<reference key="1">
    <citation type="journal article" date="2002" name="Proc. Natl. Acad. Sci. U.S.A.">
        <title>The genome sequence of the facultative intracellular pathogen Brucella melitensis.</title>
        <authorList>
            <person name="DelVecchio V.G."/>
            <person name="Kapatral V."/>
            <person name="Redkar R.J."/>
            <person name="Patra G."/>
            <person name="Mujer C."/>
            <person name="Los T."/>
            <person name="Ivanova N."/>
            <person name="Anderson I."/>
            <person name="Bhattacharyya A."/>
            <person name="Lykidis A."/>
            <person name="Reznik G."/>
            <person name="Jablonski L."/>
            <person name="Larsen N."/>
            <person name="D'Souza M."/>
            <person name="Bernal A."/>
            <person name="Mazur M."/>
            <person name="Goltsman E."/>
            <person name="Selkov E."/>
            <person name="Elzer P.H."/>
            <person name="Hagius S."/>
            <person name="O'Callaghan D."/>
            <person name="Letesson J.-J."/>
            <person name="Haselkorn R."/>
            <person name="Kyrpides N.C."/>
            <person name="Overbeek R."/>
        </authorList>
    </citation>
    <scope>NUCLEOTIDE SEQUENCE [LARGE SCALE GENOMIC DNA]</scope>
    <source>
        <strain>ATCC 23456 / CCUG 17765 / NCTC 10094 / 16M</strain>
    </source>
</reference>
<protein>
    <recommendedName>
        <fullName>Protein NorD</fullName>
    </recommendedName>
</protein>
<feature type="chain" id="PRO_0000248306" description="Protein NorD">
    <location>
        <begin position="1"/>
        <end position="633"/>
    </location>
</feature>
<feature type="domain" description="VWFA" evidence="2">
    <location>
        <begin position="445"/>
        <end position="631"/>
    </location>
</feature>
<feature type="region of interest" description="Disordered" evidence="3">
    <location>
        <begin position="232"/>
        <end position="270"/>
    </location>
</feature>
<feature type="region of interest" description="Disordered" evidence="3">
    <location>
        <begin position="290"/>
        <end position="313"/>
    </location>
</feature>
<feature type="compositionally biased region" description="Basic and acidic residues" evidence="3">
    <location>
        <begin position="232"/>
        <end position="243"/>
    </location>
</feature>
<feature type="compositionally biased region" description="Basic and acidic residues" evidence="3">
    <location>
        <begin position="258"/>
        <end position="270"/>
    </location>
</feature>
<feature type="compositionally biased region" description="Basic and acidic residues" evidence="3">
    <location>
        <begin position="292"/>
        <end position="306"/>
    </location>
</feature>
<keyword id="KW-0843">Virulence</keyword>
<organism>
    <name type="scientific">Brucella melitensis biotype 1 (strain ATCC 23456 / CCUG 17765 / NCTC 10094 / 16M)</name>
    <dbReference type="NCBI Taxonomy" id="224914"/>
    <lineage>
        <taxon>Bacteria</taxon>
        <taxon>Pseudomonadati</taxon>
        <taxon>Pseudomonadota</taxon>
        <taxon>Alphaproteobacteria</taxon>
        <taxon>Hyphomicrobiales</taxon>
        <taxon>Brucellaceae</taxon>
        <taxon>Brucella/Ochrobactrum group</taxon>
        <taxon>Brucella</taxon>
    </lineage>
</organism>